<comment type="function">
    <text evidence="1">Catalyzes the reversible phosphatidyl group transfer from one phosphatidylglycerol molecule to another to form cardiolipin (CL) (diphosphatidylglycerol) and glycerol.</text>
</comment>
<comment type="catalytic activity">
    <reaction evidence="1">
        <text>2 a 1,2-diacyl-sn-glycero-3-phospho-(1'-sn-glycerol) = a cardiolipin + glycerol</text>
        <dbReference type="Rhea" id="RHEA:31451"/>
        <dbReference type="ChEBI" id="CHEBI:17754"/>
        <dbReference type="ChEBI" id="CHEBI:62237"/>
        <dbReference type="ChEBI" id="CHEBI:64716"/>
    </reaction>
</comment>
<comment type="subcellular location">
    <subcellularLocation>
        <location evidence="1">Cell inner membrane</location>
        <topology evidence="1">Multi-pass membrane protein</topology>
    </subcellularLocation>
</comment>
<comment type="similarity">
    <text evidence="1">Belongs to the phospholipase D family. Cardiolipin synthase subfamily. ClsA sub-subfamily.</text>
</comment>
<sequence>MTTFYTVISWLMVFGYWLLIAGVTLRILMKRRAVPSAMAWLLVIYILPLFGIVAYLSFGELHLGKRRAERAKAMWPSTARWLSELKESQRIFATDYSEVARPLFQLCDRRQGIDGVKGNQLQLLTTTDATLKALIRDIELARHNIEMVFYIWQPGGLVDQVAESLMAAARRGVHCRLMLDSAGSLQFFRSPYPGMMRNAGIEVVEALKVNLFRVFLRRMDLRQHRKVVLIDNYIAYTGSMNMVDPRYFKQDAGVGQWIDLMARMEGPVASTMGIVYACDWEIETGKRILPPPPDVNIMPFEQESGHTIQVIASGPGFPEEMIHQALLTAVYSAREQLIMTTPYFVPSDDLLHAICTAALRGVEVSIIVPRDNDSTMVRWASRSFFSELLEAGVRIYQFEDGLLHTKSVLVDGQLSLVGTVNLDMRSLWLNFEITLVIDDDGFGSDLACVQDDYIARSQLLNAAEWQKRPFWHRIVERLFYFFSPLL</sequence>
<keyword id="KW-0997">Cell inner membrane</keyword>
<keyword id="KW-1003">Cell membrane</keyword>
<keyword id="KW-0444">Lipid biosynthesis</keyword>
<keyword id="KW-0443">Lipid metabolism</keyword>
<keyword id="KW-0472">Membrane</keyword>
<keyword id="KW-0594">Phospholipid biosynthesis</keyword>
<keyword id="KW-1208">Phospholipid metabolism</keyword>
<keyword id="KW-0677">Repeat</keyword>
<keyword id="KW-0808">Transferase</keyword>
<keyword id="KW-0812">Transmembrane</keyword>
<keyword id="KW-1133">Transmembrane helix</keyword>
<accession>A8GFA0</accession>
<reference key="1">
    <citation type="submission" date="2007-09" db="EMBL/GenBank/DDBJ databases">
        <title>Complete sequence of chromosome of Serratia proteamaculans 568.</title>
        <authorList>
            <consortium name="US DOE Joint Genome Institute"/>
            <person name="Copeland A."/>
            <person name="Lucas S."/>
            <person name="Lapidus A."/>
            <person name="Barry K."/>
            <person name="Glavina del Rio T."/>
            <person name="Dalin E."/>
            <person name="Tice H."/>
            <person name="Pitluck S."/>
            <person name="Chain P."/>
            <person name="Malfatti S."/>
            <person name="Shin M."/>
            <person name="Vergez L."/>
            <person name="Schmutz J."/>
            <person name="Larimer F."/>
            <person name="Land M."/>
            <person name="Hauser L."/>
            <person name="Kyrpides N."/>
            <person name="Kim E."/>
            <person name="Taghavi S."/>
            <person name="Newman L."/>
            <person name="Vangronsveld J."/>
            <person name="van der Lelie D."/>
            <person name="Richardson P."/>
        </authorList>
    </citation>
    <scope>NUCLEOTIDE SEQUENCE [LARGE SCALE GENOMIC DNA]</scope>
    <source>
        <strain>568</strain>
    </source>
</reference>
<gene>
    <name evidence="1" type="primary">clsA</name>
    <name type="synonym">cls</name>
    <name type="ordered locus">Spro_2689</name>
</gene>
<dbReference type="EC" id="2.7.8.-" evidence="1"/>
<dbReference type="EMBL" id="CP000826">
    <property type="protein sequence ID" value="ABV41790.1"/>
    <property type="molecule type" value="Genomic_DNA"/>
</dbReference>
<dbReference type="SMR" id="A8GFA0"/>
<dbReference type="STRING" id="399741.Spro_2689"/>
<dbReference type="KEGG" id="spe:Spro_2689"/>
<dbReference type="eggNOG" id="COG1502">
    <property type="taxonomic scope" value="Bacteria"/>
</dbReference>
<dbReference type="HOGENOM" id="CLU_038053_1_0_6"/>
<dbReference type="OrthoDB" id="9814092at2"/>
<dbReference type="GO" id="GO:0005886">
    <property type="term" value="C:plasma membrane"/>
    <property type="evidence" value="ECO:0007669"/>
    <property type="project" value="UniProtKB-SubCell"/>
</dbReference>
<dbReference type="GO" id="GO:0008808">
    <property type="term" value="F:cardiolipin synthase activity"/>
    <property type="evidence" value="ECO:0007669"/>
    <property type="project" value="InterPro"/>
</dbReference>
<dbReference type="GO" id="GO:0032049">
    <property type="term" value="P:cardiolipin biosynthetic process"/>
    <property type="evidence" value="ECO:0007669"/>
    <property type="project" value="InterPro"/>
</dbReference>
<dbReference type="CDD" id="cd09152">
    <property type="entry name" value="PLDc_EcCLS_like_1"/>
    <property type="match status" value="1"/>
</dbReference>
<dbReference type="CDD" id="cd09158">
    <property type="entry name" value="PLDc_EcCLS_like_2"/>
    <property type="match status" value="1"/>
</dbReference>
<dbReference type="FunFam" id="3.30.870.10:FF:000002">
    <property type="entry name" value="Cardiolipin synthase A"/>
    <property type="match status" value="1"/>
</dbReference>
<dbReference type="FunFam" id="3.30.870.10:FF:000003">
    <property type="entry name" value="Cardiolipin synthase A"/>
    <property type="match status" value="1"/>
</dbReference>
<dbReference type="Gene3D" id="3.30.870.10">
    <property type="entry name" value="Endonuclease Chain A"/>
    <property type="match status" value="2"/>
</dbReference>
<dbReference type="HAMAP" id="MF_00190">
    <property type="entry name" value="Cardiolipin_synth_ClsA"/>
    <property type="match status" value="1"/>
</dbReference>
<dbReference type="InterPro" id="IPR022924">
    <property type="entry name" value="Cardiolipin_synthase"/>
</dbReference>
<dbReference type="InterPro" id="IPR030840">
    <property type="entry name" value="CL_synthase_A"/>
</dbReference>
<dbReference type="InterPro" id="IPR027379">
    <property type="entry name" value="CLS_N"/>
</dbReference>
<dbReference type="InterPro" id="IPR025202">
    <property type="entry name" value="PLD-like_dom"/>
</dbReference>
<dbReference type="InterPro" id="IPR001736">
    <property type="entry name" value="PLipase_D/transphosphatidylase"/>
</dbReference>
<dbReference type="NCBIfam" id="TIGR04265">
    <property type="entry name" value="bac_cardiolipin"/>
    <property type="match status" value="1"/>
</dbReference>
<dbReference type="PANTHER" id="PTHR21248">
    <property type="entry name" value="CARDIOLIPIN SYNTHASE"/>
    <property type="match status" value="1"/>
</dbReference>
<dbReference type="PANTHER" id="PTHR21248:SF22">
    <property type="entry name" value="PHOSPHOLIPASE D"/>
    <property type="match status" value="1"/>
</dbReference>
<dbReference type="Pfam" id="PF13091">
    <property type="entry name" value="PLDc_2"/>
    <property type="match status" value="2"/>
</dbReference>
<dbReference type="Pfam" id="PF13396">
    <property type="entry name" value="PLDc_N"/>
    <property type="match status" value="1"/>
</dbReference>
<dbReference type="SMART" id="SM00155">
    <property type="entry name" value="PLDc"/>
    <property type="match status" value="2"/>
</dbReference>
<dbReference type="SUPFAM" id="SSF56024">
    <property type="entry name" value="Phospholipase D/nuclease"/>
    <property type="match status" value="2"/>
</dbReference>
<dbReference type="PROSITE" id="PS50035">
    <property type="entry name" value="PLD"/>
    <property type="match status" value="2"/>
</dbReference>
<evidence type="ECO:0000255" key="1">
    <source>
        <dbReference type="HAMAP-Rule" id="MF_00190"/>
    </source>
</evidence>
<protein>
    <recommendedName>
        <fullName evidence="1">Cardiolipin synthase A</fullName>
        <shortName evidence="1">CL synthase</shortName>
        <ecNumber evidence="1">2.7.8.-</ecNumber>
    </recommendedName>
</protein>
<name>CLSA_SERP5</name>
<proteinExistence type="inferred from homology"/>
<feature type="chain" id="PRO_1000077507" description="Cardiolipin synthase A">
    <location>
        <begin position="1"/>
        <end position="486"/>
    </location>
</feature>
<feature type="transmembrane region" description="Helical" evidence="1">
    <location>
        <begin position="3"/>
        <end position="23"/>
    </location>
</feature>
<feature type="transmembrane region" description="Helical" evidence="1">
    <location>
        <begin position="38"/>
        <end position="58"/>
    </location>
</feature>
<feature type="domain" description="PLD phosphodiesterase 1" evidence="1">
    <location>
        <begin position="219"/>
        <end position="246"/>
    </location>
</feature>
<feature type="domain" description="PLD phosphodiesterase 2" evidence="1">
    <location>
        <begin position="399"/>
        <end position="426"/>
    </location>
</feature>
<feature type="active site" evidence="1">
    <location>
        <position position="224"/>
    </location>
</feature>
<feature type="active site" evidence="1">
    <location>
        <position position="226"/>
    </location>
</feature>
<feature type="active site" evidence="1">
    <location>
        <position position="231"/>
    </location>
</feature>
<feature type="active site" evidence="1">
    <location>
        <position position="404"/>
    </location>
</feature>
<feature type="active site" evidence="1">
    <location>
        <position position="406"/>
    </location>
</feature>
<feature type="active site" evidence="1">
    <location>
        <position position="411"/>
    </location>
</feature>
<organism>
    <name type="scientific">Serratia proteamaculans (strain 568)</name>
    <dbReference type="NCBI Taxonomy" id="399741"/>
    <lineage>
        <taxon>Bacteria</taxon>
        <taxon>Pseudomonadati</taxon>
        <taxon>Pseudomonadota</taxon>
        <taxon>Gammaproteobacteria</taxon>
        <taxon>Enterobacterales</taxon>
        <taxon>Yersiniaceae</taxon>
        <taxon>Serratia</taxon>
    </lineage>
</organism>